<evidence type="ECO:0000255" key="1">
    <source>
        <dbReference type="HAMAP-Rule" id="MF_01310"/>
    </source>
</evidence>
<evidence type="ECO:0000305" key="2"/>
<comment type="function">
    <text evidence="1">Located on the platform of the 30S subunit, it bridges several disparate RNA helices of the 16S rRNA. Forms part of the Shine-Dalgarno cleft in the 70S ribosome.</text>
</comment>
<comment type="subunit">
    <text evidence="1">Part of the 30S ribosomal subunit. Interacts with proteins S7 and S18. Binds to IF-3.</text>
</comment>
<comment type="similarity">
    <text evidence="1">Belongs to the universal ribosomal protein uS11 family.</text>
</comment>
<name>RS11_NITV2</name>
<gene>
    <name evidence="1" type="primary">rpsK</name>
    <name type="ordered locus">DVU_1327</name>
</gene>
<proteinExistence type="inferred from homology"/>
<reference key="1">
    <citation type="journal article" date="2004" name="Nat. Biotechnol.">
        <title>The genome sequence of the anaerobic, sulfate-reducing bacterium Desulfovibrio vulgaris Hildenborough.</title>
        <authorList>
            <person name="Heidelberg J.F."/>
            <person name="Seshadri R."/>
            <person name="Haveman S.A."/>
            <person name="Hemme C.L."/>
            <person name="Paulsen I.T."/>
            <person name="Kolonay J.F."/>
            <person name="Eisen J.A."/>
            <person name="Ward N.L."/>
            <person name="Methe B.A."/>
            <person name="Brinkac L.M."/>
            <person name="Daugherty S.C."/>
            <person name="DeBoy R.T."/>
            <person name="Dodson R.J."/>
            <person name="Durkin A.S."/>
            <person name="Madupu R."/>
            <person name="Nelson W.C."/>
            <person name="Sullivan S.A."/>
            <person name="Fouts D.E."/>
            <person name="Haft D.H."/>
            <person name="Selengut J."/>
            <person name="Peterson J.D."/>
            <person name="Davidsen T.M."/>
            <person name="Zafar N."/>
            <person name="Zhou L."/>
            <person name="Radune D."/>
            <person name="Dimitrov G."/>
            <person name="Hance M."/>
            <person name="Tran K."/>
            <person name="Khouri H.M."/>
            <person name="Gill J."/>
            <person name="Utterback T.R."/>
            <person name="Feldblyum T.V."/>
            <person name="Wall J.D."/>
            <person name="Voordouw G."/>
            <person name="Fraser C.M."/>
        </authorList>
    </citation>
    <scope>NUCLEOTIDE SEQUENCE [LARGE SCALE GENOMIC DNA]</scope>
    <source>
        <strain>ATCC 29579 / DSM 644 / CCUG 34227 / NCIMB 8303 / VKM B-1760 / Hildenborough</strain>
    </source>
</reference>
<accession>Q72CF6</accession>
<organism>
    <name type="scientific">Nitratidesulfovibrio vulgaris (strain ATCC 29579 / DSM 644 / CCUG 34227 / NCIMB 8303 / VKM B-1760 / Hildenborough)</name>
    <name type="common">Desulfovibrio vulgaris</name>
    <dbReference type="NCBI Taxonomy" id="882"/>
    <lineage>
        <taxon>Bacteria</taxon>
        <taxon>Pseudomonadati</taxon>
        <taxon>Thermodesulfobacteriota</taxon>
        <taxon>Desulfovibrionia</taxon>
        <taxon>Desulfovibrionales</taxon>
        <taxon>Desulfovibrionaceae</taxon>
        <taxon>Nitratidesulfovibrio</taxon>
    </lineage>
</organism>
<dbReference type="EMBL" id="AE017285">
    <property type="protein sequence ID" value="AAS95805.1"/>
    <property type="molecule type" value="Genomic_DNA"/>
</dbReference>
<dbReference type="RefSeq" id="WP_010938622.1">
    <property type="nucleotide sequence ID" value="NC_002937.3"/>
</dbReference>
<dbReference type="RefSeq" id="YP_010546.1">
    <property type="nucleotide sequence ID" value="NC_002937.3"/>
</dbReference>
<dbReference type="SMR" id="Q72CF6"/>
<dbReference type="STRING" id="882.DVU_1327"/>
<dbReference type="PaxDb" id="882-DVU_1327"/>
<dbReference type="EnsemblBacteria" id="AAS95805">
    <property type="protein sequence ID" value="AAS95805"/>
    <property type="gene ID" value="DVU_1327"/>
</dbReference>
<dbReference type="KEGG" id="dvu:DVU_1327"/>
<dbReference type="PATRIC" id="fig|882.5.peg.1239"/>
<dbReference type="eggNOG" id="COG0100">
    <property type="taxonomic scope" value="Bacteria"/>
</dbReference>
<dbReference type="HOGENOM" id="CLU_072439_5_0_7"/>
<dbReference type="OrthoDB" id="9806415at2"/>
<dbReference type="PhylomeDB" id="Q72CF6"/>
<dbReference type="Proteomes" id="UP000002194">
    <property type="component" value="Chromosome"/>
</dbReference>
<dbReference type="GO" id="GO:1990904">
    <property type="term" value="C:ribonucleoprotein complex"/>
    <property type="evidence" value="ECO:0007669"/>
    <property type="project" value="UniProtKB-KW"/>
</dbReference>
<dbReference type="GO" id="GO:0005840">
    <property type="term" value="C:ribosome"/>
    <property type="evidence" value="ECO:0007669"/>
    <property type="project" value="UniProtKB-KW"/>
</dbReference>
<dbReference type="GO" id="GO:0019843">
    <property type="term" value="F:rRNA binding"/>
    <property type="evidence" value="ECO:0007669"/>
    <property type="project" value="UniProtKB-UniRule"/>
</dbReference>
<dbReference type="GO" id="GO:0003735">
    <property type="term" value="F:structural constituent of ribosome"/>
    <property type="evidence" value="ECO:0007669"/>
    <property type="project" value="InterPro"/>
</dbReference>
<dbReference type="GO" id="GO:0006412">
    <property type="term" value="P:translation"/>
    <property type="evidence" value="ECO:0007669"/>
    <property type="project" value="UniProtKB-UniRule"/>
</dbReference>
<dbReference type="FunFam" id="3.30.420.80:FF:000001">
    <property type="entry name" value="30S ribosomal protein S11"/>
    <property type="match status" value="1"/>
</dbReference>
<dbReference type="Gene3D" id="3.30.420.80">
    <property type="entry name" value="Ribosomal protein S11"/>
    <property type="match status" value="1"/>
</dbReference>
<dbReference type="HAMAP" id="MF_01310">
    <property type="entry name" value="Ribosomal_uS11"/>
    <property type="match status" value="1"/>
</dbReference>
<dbReference type="InterPro" id="IPR001971">
    <property type="entry name" value="Ribosomal_uS11"/>
</dbReference>
<dbReference type="InterPro" id="IPR019981">
    <property type="entry name" value="Ribosomal_uS11_bac-type"/>
</dbReference>
<dbReference type="InterPro" id="IPR018102">
    <property type="entry name" value="Ribosomal_uS11_CS"/>
</dbReference>
<dbReference type="InterPro" id="IPR036967">
    <property type="entry name" value="Ribosomal_uS11_sf"/>
</dbReference>
<dbReference type="NCBIfam" id="NF003698">
    <property type="entry name" value="PRK05309.1"/>
    <property type="match status" value="1"/>
</dbReference>
<dbReference type="NCBIfam" id="TIGR03632">
    <property type="entry name" value="uS11_bact"/>
    <property type="match status" value="1"/>
</dbReference>
<dbReference type="PANTHER" id="PTHR11759">
    <property type="entry name" value="40S RIBOSOMAL PROTEIN S14/30S RIBOSOMAL PROTEIN S11"/>
    <property type="match status" value="1"/>
</dbReference>
<dbReference type="Pfam" id="PF00411">
    <property type="entry name" value="Ribosomal_S11"/>
    <property type="match status" value="1"/>
</dbReference>
<dbReference type="PIRSF" id="PIRSF002131">
    <property type="entry name" value="Ribosomal_S11"/>
    <property type="match status" value="1"/>
</dbReference>
<dbReference type="SUPFAM" id="SSF53137">
    <property type="entry name" value="Translational machinery components"/>
    <property type="match status" value="1"/>
</dbReference>
<dbReference type="PROSITE" id="PS00054">
    <property type="entry name" value="RIBOSOMAL_S11"/>
    <property type="match status" value="1"/>
</dbReference>
<keyword id="KW-1185">Reference proteome</keyword>
<keyword id="KW-0687">Ribonucleoprotein</keyword>
<keyword id="KW-0689">Ribosomal protein</keyword>
<keyword id="KW-0694">RNA-binding</keyword>
<keyword id="KW-0699">rRNA-binding</keyword>
<protein>
    <recommendedName>
        <fullName evidence="1">Small ribosomal subunit protein uS11</fullName>
    </recommendedName>
    <alternativeName>
        <fullName evidence="2">30S ribosomal protein S11</fullName>
    </alternativeName>
</protein>
<feature type="chain" id="PRO_0000123143" description="Small ribosomal subunit protein uS11">
    <location>
        <begin position="1"/>
        <end position="129"/>
    </location>
</feature>
<sequence>MARPKRTVKKREKKNVPVGLAHIQATFNNTIVTFTDTRGNTISWASAGQSGFKGSRKSTPFAAQMAAEQAAKKAQENGMRTVGIYVKGPGSGREAAMRAINAAGFKVAFIRDITPIPHNGCRPPKRRRV</sequence>